<name>NCAP_NDVAF</name>
<comment type="function">
    <text evidence="3 4">Forms the helical nucleocapsid (NC) in a ratio of 1 N per 6 ribonucleotides, protecting the genome from nucleases (By similarity). The encapsidated genomic RNA serves as template for transcription and replication; encapsidation by N is coupled to RNA synthesis. Forms the encapsidation complex with the phosphoprotein protein P. Before encapsidation, the newly synthesized free N protein, so-called N0, is chaperoned by P (By similarity).</text>
</comment>
<comment type="subunit">
    <text evidence="2 4 5">Homomultimer; forms the nucleocapsid (By similarity). Binds to the viral genomic RNA (By similarity). N0 interacts with the phosphoprotein (via N-terminus); this interaction allows P to chaperon N0 to avoid N polymerization before encapsidation. Interacts as N-RNA template with the phosphoprotein (via C-terminus); this interaction positions the polymerase on the template (By similarity).</text>
</comment>
<comment type="subcellular location">
    <subcellularLocation>
        <location evidence="7">Virion</location>
    </subcellularLocation>
    <subcellularLocation>
        <location>Host cytoplasm</location>
    </subcellularLocation>
</comment>
<comment type="domain">
    <text evidence="4">Ncore is globular and carries the regions required for self-assembly and RNA-binding. Ntail is an intrinsically disordered monomeric domain in the C-terminus.</text>
</comment>
<comment type="similarity">
    <text evidence="7">Belongs to the paramyxoviruses nucleocapsid family.</text>
</comment>
<proteinExistence type="evidence at protein level"/>
<keyword id="KW-0167">Capsid protein</keyword>
<keyword id="KW-1139">Helical capsid protein</keyword>
<keyword id="KW-1035">Host cytoplasm</keyword>
<keyword id="KW-0687">Ribonucleoprotein</keyword>
<keyword id="KW-0694">RNA-binding</keyword>
<keyword id="KW-0543">Viral nucleoprotein</keyword>
<keyword id="KW-0946">Virion</keyword>
<accession>Q99FY3</accession>
<reference key="1">
    <citation type="journal article" date="2001" name="J. Biochem. Mol. Biol. Biophys.">
        <title>Sequence analysis of the nucleocapsid of a Newcastle disease virus heat resistant strain: comparison with other members of the paramyxoviridae.</title>
        <authorList>
            <person name="Kho C.L."/>
            <person name="Tan W.S."/>
            <person name="Yusoff K."/>
        </authorList>
    </citation>
    <scope>NUCLEOTIDE SEQUENCE [GENOMIC RNA]</scope>
</reference>
<reference key="2">
    <citation type="journal article" date="2003" name="J. Gen. Virol.">
        <title>Newcastle disease virus nucleocapsid protein: self-assembly and length-determination domains.</title>
        <authorList>
            <person name="Kho C.L."/>
            <person name="Tan W.S."/>
            <person name="Tey B.T."/>
            <person name="Yusoff K."/>
        </authorList>
    </citation>
    <scope>HOMOMULTIMERIZATION</scope>
</reference>
<reference key="3">
    <citation type="journal article" date="2004" name="Arch. Virol.">
        <title>Regions on nucleocapsid protein of Newcastle disease virus that interact with its phosphoprotein.</title>
        <authorList>
            <person name="Kho C.L."/>
            <person name="Tan W.S."/>
            <person name="Tey B.T."/>
            <person name="Yusoff K."/>
        </authorList>
    </citation>
    <scope>INTERACTION WITH P PROTEIN</scope>
</reference>
<organismHost>
    <name type="scientific">Gallus gallus</name>
    <name type="common">Chicken</name>
    <dbReference type="NCBI Taxonomy" id="9031"/>
</organismHost>
<sequence length="489" mass="53225">MSSVFDEYEQLLAAQTRPNGAHGGGERGSTLRVEVPVFTLNSDDPEDRWNFAVFCLRIAVSEDANKPLRQGALISLLCSHSQVMRNHVALAGKQNEATLTVLEIDGFTSSVPQFNNRSGVSEERAQRFMVIAGSLPRACSNGTPFVTAGVEDDAPEDITDTLERILSIQAQVWVTVAKAMTAYETADESETRRINKYMQQGRVQKKYILHPVCRSAIQLTIRHSLAVRIFLVSELKRGRNTAGGSSTYYNLVGDVDSYIRNTGLTAFFLTLKYGINTKTSALALSSLTGDIQKMKQLMRLYRMKGENAPYMTLLGDSDQMSFAPAEYAQLYSFAMGMASVLDKGTGKYQFARDFMSTSFWRLGVEYAQAQGSSINEDMAAELKLTPAARRGLAAAAQRVSEETGSVDIPTQQAGVLTGLSDGGPRASQGGSNKSQGQPDAGDGETQFLDLMRAVANSMREAPNSAQSTTHPEPPPTPGPSQDNDTDWGY</sequence>
<protein>
    <recommendedName>
        <fullName>Nucleoprotein</fullName>
    </recommendedName>
    <alternativeName>
        <fullName>Nucleocapsid protein</fullName>
        <shortName>NP</shortName>
        <shortName>Protein N</shortName>
    </alternativeName>
</protein>
<organism>
    <name type="scientific">Newcastle disease virus (isolate AF2240)</name>
    <name type="common">NDV</name>
    <dbReference type="NCBI Taxonomy" id="351071"/>
    <lineage>
        <taxon>Viruses</taxon>
        <taxon>Riboviria</taxon>
        <taxon>Orthornavirae</taxon>
        <taxon>Negarnaviricota</taxon>
        <taxon>Haploviricotina</taxon>
        <taxon>Monjiviricetes</taxon>
        <taxon>Mononegavirales</taxon>
        <taxon>Paramyxoviridae</taxon>
        <taxon>Avulavirinae</taxon>
        <taxon>Orthoavulavirus</taxon>
        <taxon>Orthoavulavirus javaense</taxon>
        <taxon>Avian paramyxovirus 1</taxon>
    </lineage>
</organism>
<dbReference type="EMBL" id="AF284646">
    <property type="protein sequence ID" value="AAG53089.1"/>
    <property type="molecule type" value="Genomic_RNA"/>
</dbReference>
<dbReference type="SMR" id="Q99FY3"/>
<dbReference type="GO" id="GO:0019029">
    <property type="term" value="C:helical viral capsid"/>
    <property type="evidence" value="ECO:0007669"/>
    <property type="project" value="UniProtKB-KW"/>
</dbReference>
<dbReference type="GO" id="GO:0030430">
    <property type="term" value="C:host cell cytoplasm"/>
    <property type="evidence" value="ECO:0007669"/>
    <property type="project" value="UniProtKB-SubCell"/>
</dbReference>
<dbReference type="GO" id="GO:1990904">
    <property type="term" value="C:ribonucleoprotein complex"/>
    <property type="evidence" value="ECO:0007669"/>
    <property type="project" value="UniProtKB-KW"/>
</dbReference>
<dbReference type="GO" id="GO:0019013">
    <property type="term" value="C:viral nucleocapsid"/>
    <property type="evidence" value="ECO:0007669"/>
    <property type="project" value="UniProtKB-KW"/>
</dbReference>
<dbReference type="GO" id="GO:0003723">
    <property type="term" value="F:RNA binding"/>
    <property type="evidence" value="ECO:0007669"/>
    <property type="project" value="UniProtKB-KW"/>
</dbReference>
<dbReference type="GO" id="GO:0005198">
    <property type="term" value="F:structural molecule activity"/>
    <property type="evidence" value="ECO:0007669"/>
    <property type="project" value="InterPro"/>
</dbReference>
<dbReference type="InterPro" id="IPR002021">
    <property type="entry name" value="Paramyx_ncap"/>
</dbReference>
<dbReference type="Pfam" id="PF00973">
    <property type="entry name" value="Paramyxo_ncap"/>
    <property type="match status" value="1"/>
</dbReference>
<feature type="chain" id="PRO_0000142663" description="Nucleoprotein">
    <location>
        <begin position="1"/>
        <end position="489"/>
    </location>
</feature>
<feature type="region of interest" description="Ncore" evidence="4">
    <location>
        <begin position="1"/>
        <end position="402"/>
    </location>
</feature>
<feature type="region of interest" description="P protein-binding">
    <location>
        <begin position="1"/>
        <end position="375"/>
    </location>
</feature>
<feature type="region of interest" description="Disordered" evidence="6">
    <location>
        <begin position="401"/>
        <end position="489"/>
    </location>
</feature>
<feature type="region of interest" description="Ntail" evidence="1">
    <location>
        <begin position="401"/>
        <end position="489"/>
    </location>
</feature>
<feature type="region of interest" description="Ntail" evidence="4">
    <location>
        <begin position="403"/>
        <end position="489"/>
    </location>
</feature>
<feature type="compositionally biased region" description="Polar residues" evidence="6">
    <location>
        <begin position="428"/>
        <end position="437"/>
    </location>
</feature>
<feature type="binding site" evidence="2">
    <location>
        <position position="178"/>
    </location>
    <ligand>
        <name>RNA</name>
        <dbReference type="ChEBI" id="CHEBI:33697"/>
    </ligand>
</feature>
<feature type="binding site" evidence="2">
    <location>
        <position position="193"/>
    </location>
    <ligand>
        <name>RNA</name>
        <dbReference type="ChEBI" id="CHEBI:33697"/>
    </ligand>
</feature>
<feature type="binding site" evidence="2">
    <location>
        <position position="258"/>
    </location>
    <ligand>
        <name>RNA</name>
        <dbReference type="ChEBI" id="CHEBI:33697"/>
    </ligand>
</feature>
<feature type="binding site" evidence="2">
    <location>
        <position position="348"/>
    </location>
    <ligand>
        <name>RNA</name>
        <dbReference type="ChEBI" id="CHEBI:33697"/>
    </ligand>
</feature>
<feature type="binding site" evidence="2">
    <location>
        <position position="352"/>
    </location>
    <ligand>
        <name>RNA</name>
        <dbReference type="ChEBI" id="CHEBI:33697"/>
    </ligand>
</feature>
<gene>
    <name type="primary">N</name>
    <name type="synonym">NP</name>
</gene>
<evidence type="ECO:0000250" key="1"/>
<evidence type="ECO:0000250" key="2">
    <source>
        <dbReference type="UniProtKB" id="O57286"/>
    </source>
</evidence>
<evidence type="ECO:0000250" key="3">
    <source>
        <dbReference type="UniProtKB" id="O89339"/>
    </source>
</evidence>
<evidence type="ECO:0000250" key="4">
    <source>
        <dbReference type="UniProtKB" id="P06159"/>
    </source>
</evidence>
<evidence type="ECO:0000250" key="5">
    <source>
        <dbReference type="UniProtKB" id="Q07097"/>
    </source>
</evidence>
<evidence type="ECO:0000256" key="6">
    <source>
        <dbReference type="SAM" id="MobiDB-lite"/>
    </source>
</evidence>
<evidence type="ECO:0000305" key="7"/>